<organism>
    <name type="scientific">Pseudomonas putida (strain ATCC 47054 / DSM 6125 / CFBP 8728 / NCIMB 11950 / KT2440)</name>
    <dbReference type="NCBI Taxonomy" id="160488"/>
    <lineage>
        <taxon>Bacteria</taxon>
        <taxon>Pseudomonadati</taxon>
        <taxon>Pseudomonadota</taxon>
        <taxon>Gammaproteobacteria</taxon>
        <taxon>Pseudomonadales</taxon>
        <taxon>Pseudomonadaceae</taxon>
        <taxon>Pseudomonas</taxon>
    </lineage>
</organism>
<comment type="function">
    <text evidence="2">Deformylase that catalyzes the conversion of N-formylmaleamic acid to maleamate in the aerobic nicotinate degradation pathway.</text>
</comment>
<comment type="catalytic activity">
    <reaction evidence="2">
        <text>N-formylmaleamate + H2O = maleamate + formate + H(+)</text>
        <dbReference type="Rhea" id="RHEA:30843"/>
        <dbReference type="ChEBI" id="CHEBI:15377"/>
        <dbReference type="ChEBI" id="CHEBI:15378"/>
        <dbReference type="ChEBI" id="CHEBI:15740"/>
        <dbReference type="ChEBI" id="CHEBI:16146"/>
        <dbReference type="ChEBI" id="CHEBI:59911"/>
        <dbReference type="EC" id="3.5.1.106"/>
    </reaction>
</comment>
<comment type="pathway">
    <text evidence="2">Cofactor degradation; nicotinate degradation.</text>
</comment>
<comment type="induction">
    <text evidence="3">Repressed by NicR in the absence of 6-hydroxynicotinate (6HNA) inducer. In presence of 6HNA, repression is alleviated.</text>
</comment>
<comment type="domain">
    <text evidence="2">Shares some sequence similarities with the AB hydrolase superfamily.</text>
</comment>
<feature type="chain" id="PRO_0000418468" description="N-formylmaleamate deformylase">
    <location>
        <begin position="1"/>
        <end position="268"/>
    </location>
</feature>
<feature type="domain" description="AB hydrolase-1" evidence="1">
    <location>
        <begin position="28"/>
        <end position="251"/>
    </location>
</feature>
<feature type="active site" description="Charge relay system" evidence="4">
    <location>
        <position position="101"/>
    </location>
</feature>
<feature type="active site" description="Charge relay system" evidence="4">
    <location>
        <position position="221"/>
    </location>
</feature>
<feature type="active site" description="Charge relay system" evidence="4">
    <location>
        <position position="245"/>
    </location>
</feature>
<feature type="mutagenesis site" description="Abolishes deformylase activity; when associated with A-125 and A-245." evidence="2">
    <original>S</original>
    <variation>A</variation>
    <location>
        <position position="101"/>
    </location>
</feature>
<feature type="mutagenesis site" description="Abolishes deformylase activity; when associated with A-101 and A-245." evidence="2">
    <original>D</original>
    <variation>A</variation>
    <location>
        <position position="125"/>
    </location>
</feature>
<feature type="mutagenesis site" description="Retains 70% of deformylase activity." evidence="2">
    <original>E</original>
    <variation>A</variation>
    <location>
        <position position="221"/>
    </location>
</feature>
<feature type="mutagenesis site" description="Abolishes deformylase activity; when associated with A-101 and A-125." evidence="2">
    <original>H</original>
    <variation>A</variation>
    <location>
        <position position="245"/>
    </location>
</feature>
<reference key="1">
    <citation type="journal article" date="2002" name="Environ. Microbiol.">
        <title>Complete genome sequence and comparative analysis of the metabolically versatile Pseudomonas putida KT2440.</title>
        <authorList>
            <person name="Nelson K.E."/>
            <person name="Weinel C."/>
            <person name="Paulsen I.T."/>
            <person name="Dodson R.J."/>
            <person name="Hilbert H."/>
            <person name="Martins dos Santos V.A.P."/>
            <person name="Fouts D.E."/>
            <person name="Gill S.R."/>
            <person name="Pop M."/>
            <person name="Holmes M."/>
            <person name="Brinkac L.M."/>
            <person name="Beanan M.J."/>
            <person name="DeBoy R.T."/>
            <person name="Daugherty S.C."/>
            <person name="Kolonay J.F."/>
            <person name="Madupu R."/>
            <person name="Nelson W.C."/>
            <person name="White O."/>
            <person name="Peterson J.D."/>
            <person name="Khouri H.M."/>
            <person name="Hance I."/>
            <person name="Chris Lee P."/>
            <person name="Holtzapple E.K."/>
            <person name="Scanlan D."/>
            <person name="Tran K."/>
            <person name="Moazzez A."/>
            <person name="Utterback T.R."/>
            <person name="Rizzo M."/>
            <person name="Lee K."/>
            <person name="Kosack D."/>
            <person name="Moestl D."/>
            <person name="Wedler H."/>
            <person name="Lauber J."/>
            <person name="Stjepandic D."/>
            <person name="Hoheisel J."/>
            <person name="Straetz M."/>
            <person name="Heim S."/>
            <person name="Kiewitz C."/>
            <person name="Eisen J.A."/>
            <person name="Timmis K.N."/>
            <person name="Duesterhoeft A."/>
            <person name="Tuemmler B."/>
            <person name="Fraser C.M."/>
        </authorList>
    </citation>
    <scope>NUCLEOTIDE SEQUENCE [LARGE SCALE GENOMIC DNA]</scope>
    <source>
        <strain>ATCC 47054 / DSM 6125 / CFBP 8728 / NCIMB 11950 / KT2440</strain>
    </source>
</reference>
<reference key="2">
    <citation type="journal article" date="2008" name="Proc. Natl. Acad. Sci. U.S.A.">
        <title>Deciphering the genetic determinants for aerobic nicotinic acid degradation: the nic cluster from Pseudomonas putida KT2440.</title>
        <authorList>
            <person name="Jimenez J.I."/>
            <person name="Canales A."/>
            <person name="Jimenez-Barbero J."/>
            <person name="Ginalski K."/>
            <person name="Rychlewski L."/>
            <person name="Garcia J.L."/>
            <person name="Diaz E."/>
        </authorList>
    </citation>
    <scope>FUNCTION</scope>
    <scope>CATALYTIC ACTIVITY</scope>
    <scope>PATHWAY</scope>
    <scope>MUTAGENESIS OF SER-101; ASP-125; GLU-221 AND HIS-245</scope>
    <source>
        <strain>ATCC 47054 / DSM 6125 / CFBP 8728 / NCIMB 11950 / KT2440</strain>
    </source>
</reference>
<reference key="3">
    <citation type="journal article" date="2011" name="Environ. Microbiol.">
        <title>A finely tuned regulatory circuit of the nicotinic acid degradation pathway in Pseudomonas putida.</title>
        <authorList>
            <person name="Jimenez J.I."/>
            <person name="Juarez J.F."/>
            <person name="Garcia J.L."/>
            <person name="Diaz E."/>
        </authorList>
    </citation>
    <scope>INDUCTION</scope>
    <source>
        <strain>ATCC 47054 / DSM 6125 / CFBP 8728 / NCIMB 11950 / KT2440</strain>
    </source>
</reference>
<sequence length="268" mass="29142">MSTFVAGGNVSANGIRQHYLRYGGKGHALILVPGITSPAITWGFVAERLGHYFDTYVLDVRGRGLSSSGPDLDYGTDACAADIPAFAAALGLDSYHLLGHSMGARFAIRAAAQGAPGLQRLVLVDPPVSGPGRRAYPSKLPWYVDSIRQATVGMSGDDMRAFCATWSDEQLALRAEWLHTCYEPAIVRAFDDFHEVDIHQYLPAVRQPALLMVAGRGGVIEPRDIAEMRELKPDIQVAYVDNAGHMIPWDDLDGFFAAFGDFLDHPLV</sequence>
<evidence type="ECO:0000255" key="1"/>
<evidence type="ECO:0000269" key="2">
    <source>
    </source>
</evidence>
<evidence type="ECO:0000269" key="3">
    <source>
    </source>
</evidence>
<evidence type="ECO:0000305" key="4"/>
<keyword id="KW-0058">Aromatic hydrocarbons catabolism</keyword>
<keyword id="KW-0378">Hydrolase</keyword>
<keyword id="KW-1185">Reference proteome</keyword>
<name>NICD_PSEPK</name>
<gene>
    <name type="primary">nicD</name>
    <name type="ordered locus">PP_3943</name>
</gene>
<accession>Q88FY3</accession>
<proteinExistence type="evidence at protein level"/>
<dbReference type="EC" id="3.5.1.106"/>
<dbReference type="EMBL" id="AE015451">
    <property type="protein sequence ID" value="AAN69537.1"/>
    <property type="molecule type" value="Genomic_DNA"/>
</dbReference>
<dbReference type="RefSeq" id="NP_746073.1">
    <property type="nucleotide sequence ID" value="NC_002947.4"/>
</dbReference>
<dbReference type="RefSeq" id="WP_010954762.1">
    <property type="nucleotide sequence ID" value="NZ_CP169744.1"/>
</dbReference>
<dbReference type="SMR" id="Q88FY3"/>
<dbReference type="STRING" id="160488.PP_3943"/>
<dbReference type="ESTHER" id="psepu-PP3943">
    <property type="family name" value="NFM-deformylase"/>
</dbReference>
<dbReference type="PaxDb" id="160488-PP_3943"/>
<dbReference type="GeneID" id="83679439"/>
<dbReference type="KEGG" id="ppu:PP_3943"/>
<dbReference type="PATRIC" id="fig|160488.4.peg.4198"/>
<dbReference type="eggNOG" id="COG0596">
    <property type="taxonomic scope" value="Bacteria"/>
</dbReference>
<dbReference type="HOGENOM" id="CLU_020336_13_5_6"/>
<dbReference type="OrthoDB" id="9808398at2"/>
<dbReference type="BioCyc" id="MetaCyc:G1G01-4208-MONOMER"/>
<dbReference type="BioCyc" id="PPUT160488:G1G01-4208-MONOMER"/>
<dbReference type="UniPathway" id="UPA01010"/>
<dbReference type="Proteomes" id="UP000000556">
    <property type="component" value="Chromosome"/>
</dbReference>
<dbReference type="GO" id="GO:0016020">
    <property type="term" value="C:membrane"/>
    <property type="evidence" value="ECO:0007669"/>
    <property type="project" value="TreeGrafter"/>
</dbReference>
<dbReference type="GO" id="GO:0016811">
    <property type="term" value="F:hydrolase activity, acting on carbon-nitrogen (but not peptide) bonds, in linear amides"/>
    <property type="evidence" value="ECO:0000314"/>
    <property type="project" value="UniProtKB"/>
</dbReference>
<dbReference type="GO" id="GO:1901848">
    <property type="term" value="P:nicotinate catabolic process"/>
    <property type="evidence" value="ECO:0000314"/>
    <property type="project" value="UniProtKB"/>
</dbReference>
<dbReference type="FunFam" id="3.40.50.1820:FF:000393">
    <property type="entry name" value="N-formylmaleamate deformylase"/>
    <property type="match status" value="1"/>
</dbReference>
<dbReference type="Gene3D" id="3.40.50.1820">
    <property type="entry name" value="alpha/beta hydrolase"/>
    <property type="match status" value="1"/>
</dbReference>
<dbReference type="InterPro" id="IPR000073">
    <property type="entry name" value="AB_hydrolase_1"/>
</dbReference>
<dbReference type="InterPro" id="IPR029058">
    <property type="entry name" value="AB_hydrolase_fold"/>
</dbReference>
<dbReference type="InterPro" id="IPR050266">
    <property type="entry name" value="AB_hydrolase_sf"/>
</dbReference>
<dbReference type="PANTHER" id="PTHR43798:SF33">
    <property type="entry name" value="HYDROLASE, PUTATIVE (AFU_ORTHOLOGUE AFUA_2G14860)-RELATED"/>
    <property type="match status" value="1"/>
</dbReference>
<dbReference type="PANTHER" id="PTHR43798">
    <property type="entry name" value="MONOACYLGLYCEROL LIPASE"/>
    <property type="match status" value="1"/>
</dbReference>
<dbReference type="Pfam" id="PF00561">
    <property type="entry name" value="Abhydrolase_1"/>
    <property type="match status" value="1"/>
</dbReference>
<dbReference type="SUPFAM" id="SSF53474">
    <property type="entry name" value="alpha/beta-Hydrolases"/>
    <property type="match status" value="1"/>
</dbReference>
<protein>
    <recommendedName>
        <fullName>N-formylmaleamate deformylase</fullName>
        <ecNumber>3.5.1.106</ecNumber>
    </recommendedName>
    <alternativeName>
        <fullName>Nicotinate degradation protein D</fullName>
    </alternativeName>
</protein>